<reference key="1">
    <citation type="journal article" date="1999" name="Eur. J. Biochem.">
        <title>Postsynaptic short-chain neurotoxins from Pseudonaja textilis: cDNA cloning, expression and protein characterization.</title>
        <authorList>
            <person name="Gong N.L."/>
            <person name="Armugam A."/>
            <person name="Jeyaseelan K."/>
        </authorList>
    </citation>
    <scope>NUCLEOTIDE SEQUENCE [MRNA]</scope>
    <scope>FUNCTION</scope>
    <scope>TOXIC DOSE</scope>
    <source>
        <tissue>Venom gland</tissue>
    </source>
</reference>
<reference key="2">
    <citation type="journal article" date="2000" name="FEBS Lett.">
        <title>Molecular cloning, characterization and evolution of the genes encoding a new group of short-chain alpha-neurotoxins in an Australian elapid, Pseudonaja textilis.</title>
        <authorList>
            <person name="Gong N.L."/>
            <person name="Armugam A."/>
            <person name="Jeyaseelan K."/>
        </authorList>
    </citation>
    <scope>NUCLEOTIDE SEQUENCE [GENOMIC DNA]</scope>
    <source>
        <tissue>Liver</tissue>
    </source>
</reference>
<reference key="3">
    <citation type="journal article" date="2006" name="Mol. Cell. Proteomics">
        <title>Molecular diversity in venom from the Australian Brown snake, Pseudonaja textilis.</title>
        <authorList>
            <person name="Birrell G.W."/>
            <person name="Earl S."/>
            <person name="Masci P.P."/>
            <person name="de Jersey J."/>
            <person name="Wallis T.P."/>
            <person name="Gorman J.J."/>
            <person name="Lavin M.F."/>
        </authorList>
    </citation>
    <scope>IDENTIFICATION BY MASS SPECTROMETRY</scope>
    <scope>SUBCELLULAR LOCATION</scope>
    <source>
        <tissue>Venom</tissue>
    </source>
</reference>
<evidence type="ECO:0000250" key="1"/>
<evidence type="ECO:0000250" key="2">
    <source>
        <dbReference type="UniProtKB" id="P60301"/>
    </source>
</evidence>
<evidence type="ECO:0000269" key="3">
    <source>
    </source>
</evidence>
<evidence type="ECO:0000269" key="4">
    <source>
    </source>
</evidence>
<evidence type="ECO:0000305" key="5"/>
<evidence type="ECO:0000305" key="6">
    <source>
    </source>
</evidence>
<name>3S36_PSETE</name>
<protein>
    <recommendedName>
        <fullName>Short neurotoxin 6</fullName>
        <shortName>SNTX6</shortName>
    </recommendedName>
    <alternativeName>
        <fullName>Alpha-neurotoxin 6</fullName>
    </alternativeName>
</protein>
<keyword id="KW-0008">Acetylcholine receptor inhibiting toxin</keyword>
<keyword id="KW-1015">Disulfide bond</keyword>
<keyword id="KW-0872">Ion channel impairing toxin</keyword>
<keyword id="KW-0528">Neurotoxin</keyword>
<keyword id="KW-0629">Postsynaptic neurotoxin</keyword>
<keyword id="KW-1185">Reference proteome</keyword>
<keyword id="KW-0964">Secreted</keyword>
<keyword id="KW-0732">Signal</keyword>
<keyword id="KW-0800">Toxin</keyword>
<sequence length="79" mass="8570">MKTLLLTLVMVTIMCLDLGYTLTCYKSLSGTVVCKPHETICYRRLIPATHGNAIIDRGCSTSCPGGNRPVCCSTDLCNK</sequence>
<proteinExistence type="evidence at protein level"/>
<feature type="signal peptide" evidence="1">
    <location>
        <begin position="1"/>
        <end position="21"/>
    </location>
</feature>
<feature type="chain" id="PRO_0000035465" description="Short neurotoxin 6">
    <location>
        <begin position="22"/>
        <end position="79"/>
    </location>
</feature>
<feature type="disulfide bond" evidence="2">
    <location>
        <begin position="24"/>
        <end position="41"/>
    </location>
</feature>
<feature type="disulfide bond" evidence="2">
    <location>
        <begin position="34"/>
        <end position="59"/>
    </location>
</feature>
<feature type="disulfide bond" evidence="2">
    <location>
        <begin position="63"/>
        <end position="71"/>
    </location>
</feature>
<feature type="disulfide bond" evidence="2">
    <location>
        <begin position="72"/>
        <end position="77"/>
    </location>
</feature>
<comment type="function">
    <text evidence="3">Binds with high affinity to muscle nicotinic acetylcholine receptor (nAChR) and hinders acetylcholine binding to the receptor, thereby impairing neuromuscular transmission. Competes with the binding of alpha-bungarotoxin on muscle AChR (from Torpedo) with an IC(50) of 0.18 uM. Causes muscle paralysis, spasms and increased respiration.</text>
</comment>
<comment type="subcellular location">
    <subcellularLocation>
        <location evidence="4">Secreted</location>
    </subcellularLocation>
</comment>
<comment type="tissue specificity">
    <text evidence="6">Expressed by the venom gland.</text>
</comment>
<comment type="toxic dose">
    <text evidence="3">LD(50) is 1 mg/kg by intravenous injection into mice.</text>
</comment>
<comment type="similarity">
    <text evidence="5">Belongs to the three-finger toxin family. Short-chain subfamily. Type III alpha-neurotoxin sub-subfamily.</text>
</comment>
<accession>Q9W7J7</accession>
<dbReference type="EMBL" id="AF082980">
    <property type="protein sequence ID" value="AAD40972.1"/>
    <property type="molecule type" value="mRNA"/>
</dbReference>
<dbReference type="EMBL" id="AF204973">
    <property type="protein sequence ID" value="AAF75224.1"/>
    <property type="molecule type" value="Genomic_DNA"/>
</dbReference>
<dbReference type="SMR" id="Q9W7J7"/>
<dbReference type="Proteomes" id="UP000472273">
    <property type="component" value="Unplaced"/>
</dbReference>
<dbReference type="GO" id="GO:0005576">
    <property type="term" value="C:extracellular region"/>
    <property type="evidence" value="ECO:0007669"/>
    <property type="project" value="UniProtKB-SubCell"/>
</dbReference>
<dbReference type="GO" id="GO:0030550">
    <property type="term" value="F:acetylcholine receptor inhibitor activity"/>
    <property type="evidence" value="ECO:0007669"/>
    <property type="project" value="UniProtKB-KW"/>
</dbReference>
<dbReference type="GO" id="GO:0099106">
    <property type="term" value="F:ion channel regulator activity"/>
    <property type="evidence" value="ECO:0007669"/>
    <property type="project" value="UniProtKB-KW"/>
</dbReference>
<dbReference type="GO" id="GO:0090729">
    <property type="term" value="F:toxin activity"/>
    <property type="evidence" value="ECO:0007669"/>
    <property type="project" value="UniProtKB-KW"/>
</dbReference>
<dbReference type="CDD" id="cd00206">
    <property type="entry name" value="TFP_snake_toxin"/>
    <property type="match status" value="1"/>
</dbReference>
<dbReference type="Gene3D" id="2.10.60.10">
    <property type="entry name" value="CD59"/>
    <property type="match status" value="1"/>
</dbReference>
<dbReference type="InterPro" id="IPR003571">
    <property type="entry name" value="Snake_3FTx"/>
</dbReference>
<dbReference type="InterPro" id="IPR045860">
    <property type="entry name" value="Snake_toxin-like_sf"/>
</dbReference>
<dbReference type="InterPro" id="IPR054131">
    <property type="entry name" value="Toxin_cobra-type"/>
</dbReference>
<dbReference type="Pfam" id="PF21947">
    <property type="entry name" value="Toxin_cobra-type"/>
    <property type="match status" value="1"/>
</dbReference>
<dbReference type="SUPFAM" id="SSF57302">
    <property type="entry name" value="Snake toxin-like"/>
    <property type="match status" value="1"/>
</dbReference>
<organism>
    <name type="scientific">Pseudonaja textilis</name>
    <name type="common">Eastern brown snake</name>
    <dbReference type="NCBI Taxonomy" id="8673"/>
    <lineage>
        <taxon>Eukaryota</taxon>
        <taxon>Metazoa</taxon>
        <taxon>Chordata</taxon>
        <taxon>Craniata</taxon>
        <taxon>Vertebrata</taxon>
        <taxon>Euteleostomi</taxon>
        <taxon>Lepidosauria</taxon>
        <taxon>Squamata</taxon>
        <taxon>Bifurcata</taxon>
        <taxon>Unidentata</taxon>
        <taxon>Episquamata</taxon>
        <taxon>Toxicofera</taxon>
        <taxon>Serpentes</taxon>
        <taxon>Colubroidea</taxon>
        <taxon>Elapidae</taxon>
        <taxon>Hydrophiinae</taxon>
        <taxon>Pseudonaja</taxon>
    </lineage>
</organism>